<keyword id="KW-1185">Reference proteome</keyword>
<protein>
    <recommendedName>
        <fullName>Uncharacterized 10 kDa protein</fullName>
    </recommendedName>
    <alternativeName>
        <fullName>ORF 6</fullName>
    </alternativeName>
</protein>
<dbReference type="EMBL" id="D13747">
    <property type="protein sequence ID" value="BAA02896.1"/>
    <property type="molecule type" value="Genomic_RNA"/>
</dbReference>
<dbReference type="PIR" id="JT0475">
    <property type="entry name" value="WMWGN5"/>
</dbReference>
<dbReference type="RefSeq" id="NP_040783.1">
    <property type="nucleotide sequence ID" value="NC_001441.1"/>
</dbReference>
<dbReference type="GeneID" id="1494015"/>
<dbReference type="KEGG" id="vg:1494015"/>
<dbReference type="Proteomes" id="UP000008865">
    <property type="component" value="Genome"/>
</dbReference>
<organism>
    <name type="scientific">Narcissus mosaic virus</name>
    <name type="common">NMV</name>
    <dbReference type="NCBI Taxonomy" id="12180"/>
    <lineage>
        <taxon>Viruses</taxon>
        <taxon>Riboviria</taxon>
        <taxon>Orthornavirae</taxon>
        <taxon>Kitrinoviricota</taxon>
        <taxon>Alsuviricetes</taxon>
        <taxon>Tymovirales</taxon>
        <taxon>Alphaflexiviridae</taxon>
        <taxon>Potexvirus</taxon>
    </lineage>
</organism>
<accession>P15099</accession>
<organismHost>
    <name type="scientific">Narcissus pseudonarcissus</name>
    <name type="common">Daffodil</name>
    <dbReference type="NCBI Taxonomy" id="39639"/>
</organismHost>
<feature type="chain" id="PRO_0000222648" description="Uncharacterized 10 kDa protein">
    <location>
        <begin position="1"/>
        <end position="94"/>
    </location>
</feature>
<sequence>MNQPQLPSPPQLRFSCSVIFSRNLVLTLTQSHPLCGTSLEPTPMCKRVVQQCYLEPHHQTLRSPGKLSLDSFTSLTSLHASSACTSPRWSGTCY</sequence>
<reference key="1">
    <citation type="journal article" date="1989" name="J. Gen. Virol.">
        <title>Nucleotide sequence of narcissus mosaic virus RNA.</title>
        <authorList>
            <person name="Zuidema D."/>
            <person name="Linthorst H.J.M."/>
            <person name="Huisman M.J."/>
            <person name="Asjes C.J."/>
            <person name="Bol J.F."/>
        </authorList>
    </citation>
    <scope>NUCLEOTIDE SEQUENCE [GENOMIC RNA]</scope>
</reference>
<name>YOR6_NMV</name>
<proteinExistence type="predicted"/>